<dbReference type="EC" id="3.6.5.3" evidence="2"/>
<dbReference type="EMBL" id="CP000922">
    <property type="protein sequence ID" value="ACJ32487.1"/>
    <property type="molecule type" value="Genomic_DNA"/>
</dbReference>
<dbReference type="RefSeq" id="WP_003397655.1">
    <property type="nucleotide sequence ID" value="NC_011567.1"/>
</dbReference>
<dbReference type="SMR" id="B7GJ65"/>
<dbReference type="STRING" id="491915.Aflv_0103"/>
<dbReference type="GeneID" id="7036302"/>
<dbReference type="KEGG" id="afl:Aflv_0103"/>
<dbReference type="eggNOG" id="COG0050">
    <property type="taxonomic scope" value="Bacteria"/>
</dbReference>
<dbReference type="HOGENOM" id="CLU_007265_0_1_9"/>
<dbReference type="Proteomes" id="UP000000742">
    <property type="component" value="Chromosome"/>
</dbReference>
<dbReference type="GO" id="GO:0005829">
    <property type="term" value="C:cytosol"/>
    <property type="evidence" value="ECO:0007669"/>
    <property type="project" value="TreeGrafter"/>
</dbReference>
<dbReference type="GO" id="GO:0005525">
    <property type="term" value="F:GTP binding"/>
    <property type="evidence" value="ECO:0007669"/>
    <property type="project" value="UniProtKB-UniRule"/>
</dbReference>
<dbReference type="GO" id="GO:0003924">
    <property type="term" value="F:GTPase activity"/>
    <property type="evidence" value="ECO:0007669"/>
    <property type="project" value="InterPro"/>
</dbReference>
<dbReference type="GO" id="GO:0003746">
    <property type="term" value="F:translation elongation factor activity"/>
    <property type="evidence" value="ECO:0007669"/>
    <property type="project" value="UniProtKB-UniRule"/>
</dbReference>
<dbReference type="CDD" id="cd01884">
    <property type="entry name" value="EF_Tu"/>
    <property type="match status" value="1"/>
</dbReference>
<dbReference type="CDD" id="cd03697">
    <property type="entry name" value="EFTU_II"/>
    <property type="match status" value="1"/>
</dbReference>
<dbReference type="CDD" id="cd03707">
    <property type="entry name" value="EFTU_III"/>
    <property type="match status" value="1"/>
</dbReference>
<dbReference type="FunFam" id="2.40.30.10:FF:000001">
    <property type="entry name" value="Elongation factor Tu"/>
    <property type="match status" value="1"/>
</dbReference>
<dbReference type="FunFam" id="3.40.50.300:FF:000003">
    <property type="entry name" value="Elongation factor Tu"/>
    <property type="match status" value="1"/>
</dbReference>
<dbReference type="Gene3D" id="3.40.50.300">
    <property type="entry name" value="P-loop containing nucleotide triphosphate hydrolases"/>
    <property type="match status" value="1"/>
</dbReference>
<dbReference type="Gene3D" id="2.40.30.10">
    <property type="entry name" value="Translation factors"/>
    <property type="match status" value="2"/>
</dbReference>
<dbReference type="HAMAP" id="MF_00118_B">
    <property type="entry name" value="EF_Tu_B"/>
    <property type="match status" value="1"/>
</dbReference>
<dbReference type="InterPro" id="IPR041709">
    <property type="entry name" value="EF-Tu_GTP-bd"/>
</dbReference>
<dbReference type="InterPro" id="IPR050055">
    <property type="entry name" value="EF-Tu_GTPase"/>
</dbReference>
<dbReference type="InterPro" id="IPR004161">
    <property type="entry name" value="EFTu-like_2"/>
</dbReference>
<dbReference type="InterPro" id="IPR033720">
    <property type="entry name" value="EFTU_2"/>
</dbReference>
<dbReference type="InterPro" id="IPR031157">
    <property type="entry name" value="G_TR_CS"/>
</dbReference>
<dbReference type="InterPro" id="IPR027417">
    <property type="entry name" value="P-loop_NTPase"/>
</dbReference>
<dbReference type="InterPro" id="IPR005225">
    <property type="entry name" value="Small_GTP-bd"/>
</dbReference>
<dbReference type="InterPro" id="IPR000795">
    <property type="entry name" value="T_Tr_GTP-bd_dom"/>
</dbReference>
<dbReference type="InterPro" id="IPR009000">
    <property type="entry name" value="Transl_B-barrel_sf"/>
</dbReference>
<dbReference type="InterPro" id="IPR009001">
    <property type="entry name" value="Transl_elong_EF1A/Init_IF2_C"/>
</dbReference>
<dbReference type="InterPro" id="IPR004541">
    <property type="entry name" value="Transl_elong_EFTu/EF1A_bac/org"/>
</dbReference>
<dbReference type="InterPro" id="IPR004160">
    <property type="entry name" value="Transl_elong_EFTu/EF1A_C"/>
</dbReference>
<dbReference type="NCBIfam" id="TIGR00485">
    <property type="entry name" value="EF-Tu"/>
    <property type="match status" value="1"/>
</dbReference>
<dbReference type="NCBIfam" id="NF000766">
    <property type="entry name" value="PRK00049.1"/>
    <property type="match status" value="1"/>
</dbReference>
<dbReference type="NCBIfam" id="NF009372">
    <property type="entry name" value="PRK12735.1"/>
    <property type="match status" value="1"/>
</dbReference>
<dbReference type="NCBIfam" id="NF009373">
    <property type="entry name" value="PRK12736.1"/>
    <property type="match status" value="1"/>
</dbReference>
<dbReference type="NCBIfam" id="TIGR00231">
    <property type="entry name" value="small_GTP"/>
    <property type="match status" value="1"/>
</dbReference>
<dbReference type="PANTHER" id="PTHR43721:SF22">
    <property type="entry name" value="ELONGATION FACTOR TU, MITOCHONDRIAL"/>
    <property type="match status" value="1"/>
</dbReference>
<dbReference type="PANTHER" id="PTHR43721">
    <property type="entry name" value="ELONGATION FACTOR TU-RELATED"/>
    <property type="match status" value="1"/>
</dbReference>
<dbReference type="Pfam" id="PF00009">
    <property type="entry name" value="GTP_EFTU"/>
    <property type="match status" value="1"/>
</dbReference>
<dbReference type="Pfam" id="PF03144">
    <property type="entry name" value="GTP_EFTU_D2"/>
    <property type="match status" value="1"/>
</dbReference>
<dbReference type="Pfam" id="PF03143">
    <property type="entry name" value="GTP_EFTU_D3"/>
    <property type="match status" value="1"/>
</dbReference>
<dbReference type="PRINTS" id="PR00315">
    <property type="entry name" value="ELONGATNFCT"/>
</dbReference>
<dbReference type="SUPFAM" id="SSF50465">
    <property type="entry name" value="EF-Tu/eEF-1alpha/eIF2-gamma C-terminal domain"/>
    <property type="match status" value="1"/>
</dbReference>
<dbReference type="SUPFAM" id="SSF52540">
    <property type="entry name" value="P-loop containing nucleoside triphosphate hydrolases"/>
    <property type="match status" value="1"/>
</dbReference>
<dbReference type="SUPFAM" id="SSF50447">
    <property type="entry name" value="Translation proteins"/>
    <property type="match status" value="1"/>
</dbReference>
<dbReference type="PROSITE" id="PS00301">
    <property type="entry name" value="G_TR_1"/>
    <property type="match status" value="1"/>
</dbReference>
<dbReference type="PROSITE" id="PS51722">
    <property type="entry name" value="G_TR_2"/>
    <property type="match status" value="1"/>
</dbReference>
<proteinExistence type="inferred from homology"/>
<sequence>MAKAKFERTKPHVNIGTIGHVDHGKTTLTAAITTVLAKQGKAEARAYDQIDAAPEERERGITISTAHVEYETDNRHYAHVDCPGHADYVKNMITGAAQMDGAILVVSAADGPMPQTREHILLSRQVGVPYIVVFLNKCDMVDDEELLELVEMEVRDLLSEYDFPGDEVPVIKGSALKALEGDPAWEAKIIELMNAVDEYIPTPQREVDKPFMMPVEDVFSITGRGTVATGRVERGILKVGDQVEIIGLSEEPKATTVTGVEMFRKLLDQAEAGDNIGALLRGVSRDEVQRGQVLAKPGTITPHTKFKAQVYVLTKEEGGRHTPFFSNYRPQFYFRTTDVTGIIQLPEGVEMVMPGDNIEMTVELIAPIAIEEGTKFSIREGGRTVGAGSVSEIIE</sequence>
<protein>
    <recommendedName>
        <fullName evidence="2">Elongation factor Tu</fullName>
        <shortName evidence="2">EF-Tu</shortName>
        <ecNumber evidence="2">3.6.5.3</ecNumber>
    </recommendedName>
</protein>
<keyword id="KW-0963">Cytoplasm</keyword>
<keyword id="KW-0251">Elongation factor</keyword>
<keyword id="KW-0342">GTP-binding</keyword>
<keyword id="KW-0378">Hydrolase</keyword>
<keyword id="KW-0460">Magnesium</keyword>
<keyword id="KW-0479">Metal-binding</keyword>
<keyword id="KW-0547">Nucleotide-binding</keyword>
<keyword id="KW-0648">Protein biosynthesis</keyword>
<organism>
    <name type="scientific">Anoxybacillus flavithermus (strain DSM 21510 / WK1)</name>
    <dbReference type="NCBI Taxonomy" id="491915"/>
    <lineage>
        <taxon>Bacteria</taxon>
        <taxon>Bacillati</taxon>
        <taxon>Bacillota</taxon>
        <taxon>Bacilli</taxon>
        <taxon>Bacillales</taxon>
        <taxon>Anoxybacillaceae</taxon>
        <taxon>Anoxybacillus</taxon>
    </lineage>
</organism>
<feature type="chain" id="PRO_1000201377" description="Elongation factor Tu">
    <location>
        <begin position="1"/>
        <end position="395"/>
    </location>
</feature>
<feature type="domain" description="tr-type G">
    <location>
        <begin position="10"/>
        <end position="204"/>
    </location>
</feature>
<feature type="region of interest" description="G1" evidence="1">
    <location>
        <begin position="19"/>
        <end position="26"/>
    </location>
</feature>
<feature type="region of interest" description="G2" evidence="1">
    <location>
        <begin position="60"/>
        <end position="64"/>
    </location>
</feature>
<feature type="region of interest" description="G3" evidence="1">
    <location>
        <begin position="81"/>
        <end position="84"/>
    </location>
</feature>
<feature type="region of interest" description="G4" evidence="1">
    <location>
        <begin position="136"/>
        <end position="139"/>
    </location>
</feature>
<feature type="region of interest" description="G5" evidence="1">
    <location>
        <begin position="174"/>
        <end position="176"/>
    </location>
</feature>
<feature type="binding site" evidence="2">
    <location>
        <begin position="19"/>
        <end position="26"/>
    </location>
    <ligand>
        <name>GTP</name>
        <dbReference type="ChEBI" id="CHEBI:37565"/>
    </ligand>
</feature>
<feature type="binding site" evidence="2">
    <location>
        <position position="26"/>
    </location>
    <ligand>
        <name>Mg(2+)</name>
        <dbReference type="ChEBI" id="CHEBI:18420"/>
    </ligand>
</feature>
<feature type="binding site" evidence="2">
    <location>
        <begin position="81"/>
        <end position="85"/>
    </location>
    <ligand>
        <name>GTP</name>
        <dbReference type="ChEBI" id="CHEBI:37565"/>
    </ligand>
</feature>
<feature type="binding site" evidence="2">
    <location>
        <begin position="136"/>
        <end position="139"/>
    </location>
    <ligand>
        <name>GTP</name>
        <dbReference type="ChEBI" id="CHEBI:37565"/>
    </ligand>
</feature>
<name>EFTU_ANOFW</name>
<gene>
    <name evidence="2" type="primary">tuf</name>
    <name type="ordered locus">Aflv_0103</name>
</gene>
<accession>B7GJ65</accession>
<comment type="function">
    <text evidence="2">GTP hydrolase that promotes the GTP-dependent binding of aminoacyl-tRNA to the A-site of ribosomes during protein biosynthesis.</text>
</comment>
<comment type="catalytic activity">
    <reaction evidence="2">
        <text>GTP + H2O = GDP + phosphate + H(+)</text>
        <dbReference type="Rhea" id="RHEA:19669"/>
        <dbReference type="ChEBI" id="CHEBI:15377"/>
        <dbReference type="ChEBI" id="CHEBI:15378"/>
        <dbReference type="ChEBI" id="CHEBI:37565"/>
        <dbReference type="ChEBI" id="CHEBI:43474"/>
        <dbReference type="ChEBI" id="CHEBI:58189"/>
        <dbReference type="EC" id="3.6.5.3"/>
    </reaction>
    <physiologicalReaction direction="left-to-right" evidence="2">
        <dbReference type="Rhea" id="RHEA:19670"/>
    </physiologicalReaction>
</comment>
<comment type="subunit">
    <text evidence="2">Monomer.</text>
</comment>
<comment type="subcellular location">
    <subcellularLocation>
        <location evidence="2">Cytoplasm</location>
    </subcellularLocation>
</comment>
<comment type="similarity">
    <text evidence="2">Belongs to the TRAFAC class translation factor GTPase superfamily. Classic translation factor GTPase family. EF-Tu/EF-1A subfamily.</text>
</comment>
<reference key="1">
    <citation type="journal article" date="2008" name="Genome Biol.">
        <title>Encapsulated in silica: genome, proteome and physiology of the thermophilic bacterium Anoxybacillus flavithermus WK1.</title>
        <authorList>
            <person name="Saw J.H."/>
            <person name="Mountain B.W."/>
            <person name="Feng L."/>
            <person name="Omelchenko M.V."/>
            <person name="Hou S."/>
            <person name="Saito J.A."/>
            <person name="Stott M.B."/>
            <person name="Li D."/>
            <person name="Zhao G."/>
            <person name="Wu J."/>
            <person name="Galperin M.Y."/>
            <person name="Koonin E.V."/>
            <person name="Makarova K.S."/>
            <person name="Wolf Y.I."/>
            <person name="Rigden D.J."/>
            <person name="Dunfield P.F."/>
            <person name="Wang L."/>
            <person name="Alam M."/>
        </authorList>
    </citation>
    <scope>NUCLEOTIDE SEQUENCE [LARGE SCALE GENOMIC DNA]</scope>
    <source>
        <strain>DSM 21510 / WK1</strain>
    </source>
</reference>
<evidence type="ECO:0000250" key="1"/>
<evidence type="ECO:0000255" key="2">
    <source>
        <dbReference type="HAMAP-Rule" id="MF_00118"/>
    </source>
</evidence>